<feature type="chain" id="PRO_0000431403" description="Shikimate dehydrogenase (NADP(+))">
    <location>
        <begin position="1"/>
        <end position="263"/>
    </location>
</feature>
<feature type="active site" description="Proton acceptor" evidence="1">
    <location>
        <position position="69"/>
    </location>
</feature>
<feature type="binding site" evidence="1">
    <location>
        <begin position="16"/>
        <end position="18"/>
    </location>
    <ligand>
        <name>shikimate</name>
        <dbReference type="ChEBI" id="CHEBI:36208"/>
    </ligand>
</feature>
<feature type="binding site" evidence="1">
    <location>
        <position position="65"/>
    </location>
    <ligand>
        <name>shikimate</name>
        <dbReference type="ChEBI" id="CHEBI:36208"/>
    </ligand>
</feature>
<feature type="binding site" evidence="1">
    <location>
        <position position="90"/>
    </location>
    <ligand>
        <name>shikimate</name>
        <dbReference type="ChEBI" id="CHEBI:36208"/>
    </ligand>
</feature>
<feature type="binding site" evidence="1">
    <location>
        <position position="105"/>
    </location>
    <ligand>
        <name>shikimate</name>
        <dbReference type="ChEBI" id="CHEBI:36208"/>
    </ligand>
</feature>
<feature type="binding site" evidence="1">
    <location>
        <begin position="125"/>
        <end position="129"/>
    </location>
    <ligand>
        <name>NADP(+)</name>
        <dbReference type="ChEBI" id="CHEBI:58349"/>
    </ligand>
</feature>
<feature type="binding site" evidence="1">
    <location>
        <position position="208"/>
    </location>
    <ligand>
        <name>NADP(+)</name>
        <dbReference type="ChEBI" id="CHEBI:58349"/>
    </ligand>
</feature>
<feature type="binding site" evidence="1">
    <location>
        <position position="210"/>
    </location>
    <ligand>
        <name>shikimate</name>
        <dbReference type="ChEBI" id="CHEBI:36208"/>
    </ligand>
</feature>
<feature type="binding site" evidence="1">
    <location>
        <position position="230"/>
    </location>
    <ligand>
        <name>NADP(+)</name>
        <dbReference type="ChEBI" id="CHEBI:58349"/>
    </ligand>
</feature>
<gene>
    <name evidence="1 3" type="primary">aroE</name>
</gene>
<protein>
    <recommendedName>
        <fullName evidence="1 3">Shikimate dehydrogenase (NADP(+))</fullName>
        <shortName evidence="1 3">SDH</shortName>
        <ecNumber evidence="1 2">1.1.1.25</ecNumber>
    </recommendedName>
</protein>
<reference key="1">
    <citation type="journal article" date="2006" name="FEBS J.">
        <title>Biochemical characterization and inhibitor discovery of shikimate dehydrogenase from Helicobacter pylori.</title>
        <authorList>
            <person name="Han C."/>
            <person name="Wang L."/>
            <person name="Yu K."/>
            <person name="Chen L."/>
            <person name="Hu L."/>
            <person name="Chen K."/>
            <person name="Jiang H."/>
            <person name="Shen X."/>
        </authorList>
    </citation>
    <scope>NUCLEOTIDE SEQUENCE [GENOMIC DNA]</scope>
    <scope>FUNCTION</scope>
    <scope>CATALYTIC ACTIVITY</scope>
    <scope>ACTIVITY REGULATION</scope>
    <scope>BIOPHYSICOCHEMICAL PROPERTIES</scope>
    <scope>SUBSTRATE SPECIFICITY</scope>
    <source>
        <strain>SS1</strain>
    </source>
</reference>
<organism>
    <name type="scientific">Helicobacter pylori</name>
    <name type="common">Campylobacter pylori</name>
    <dbReference type="NCBI Taxonomy" id="210"/>
    <lineage>
        <taxon>Bacteria</taxon>
        <taxon>Pseudomonadati</taxon>
        <taxon>Campylobacterota</taxon>
        <taxon>Epsilonproteobacteria</taxon>
        <taxon>Campylobacterales</taxon>
        <taxon>Helicobacteraceae</taxon>
        <taxon>Helicobacter</taxon>
    </lineage>
</organism>
<accession>Q56S04</accession>
<evidence type="ECO:0000255" key="1">
    <source>
        <dbReference type="HAMAP-Rule" id="MF_00222"/>
    </source>
</evidence>
<evidence type="ECO:0000269" key="2">
    <source>
    </source>
</evidence>
<evidence type="ECO:0000303" key="3">
    <source>
    </source>
</evidence>
<comment type="function">
    <text evidence="1 2">Involved in the biosynthesis of the chorismate, which leads to the biosynthesis of aromatic amino acids. Catalyzes the reversible NADPH linked reduction of 3-dehydroshikimate (DHSA) to yield shikimate (SA). It can also use NAD to oxidize shikimate.</text>
</comment>
<comment type="catalytic activity">
    <reaction evidence="1 2">
        <text>shikimate + NADP(+) = 3-dehydroshikimate + NADPH + H(+)</text>
        <dbReference type="Rhea" id="RHEA:17737"/>
        <dbReference type="ChEBI" id="CHEBI:15378"/>
        <dbReference type="ChEBI" id="CHEBI:16630"/>
        <dbReference type="ChEBI" id="CHEBI:36208"/>
        <dbReference type="ChEBI" id="CHEBI:57783"/>
        <dbReference type="ChEBI" id="CHEBI:58349"/>
        <dbReference type="EC" id="1.1.1.25"/>
    </reaction>
</comment>
<comment type="activity regulation">
    <text evidence="2">Inhibited by curcumin, 3-(2-naphthyloxy)-4-oxo-2-(trifluoromethyl)-4H-chromen-7-yl 3-chlorobenzoate, butyl 2-{[3-(2-naphthyloxy)-4-oxo-2-(trifluoromethyl)-4H-chromen-7-yl]oxy}propanoate, 2-({2-[(2-{[2-(2,3-dimethylanilino)-2-oxoethyl]sulfanyl}-1,3-benzothiazol-6-yl)amino]-2-oxoethyl}sulfanyl)-N-(2-naphthyl)acetamide, and maesaquinone diacetate.</text>
</comment>
<comment type="biophysicochemical properties">
    <kinetics>
        <KM evidence="2">148 uM for shikimate (at pH 8 and 25 degrees Celsius)</KM>
        <KM evidence="2">182 uM for NADP (at pH 8 and 25 degrees Celsius)</KM>
        <KM evidence="2">2900 uM for NAD (at pH 8 and 25 degrees Celsius)</KM>
        <text evidence="2">kcat is 5.2 sec(-1) for dehydrogenase activity with NAD (at pH 8 and 25 degrees Celsius). kcat is 7.1 sec(-1) for dehydrogenase activity with NADP (at pH 8 and 25 degrees Celsius). kcat is 7.7 sec(-1) for dehydrogenase activity with shikimate (at pH 8 and 25 degrees Celsius).</text>
    </kinetics>
    <phDependence>
        <text evidence="2">Optimum pH is between 8 and 9.</text>
    </phDependence>
    <temperatureDependence>
        <text evidence="2">Optimum temperature is 60 degrees Celsius.</text>
    </temperatureDependence>
</comment>
<comment type="pathway">
    <text evidence="1">Metabolic intermediate biosynthesis; chorismate biosynthesis; chorismate from D-erythrose 4-phosphate and phosphoenolpyruvate: step 4/7.</text>
</comment>
<comment type="subunit">
    <text evidence="1">Homodimer.</text>
</comment>
<comment type="similarity">
    <text evidence="1">Belongs to the shikimate dehydrogenase family.</text>
</comment>
<proteinExistence type="evidence at protein level"/>
<name>AROE_HELPX</name>
<sequence length="263" mass="28976">MKLKSFGVFGNPIKHSKSPLIHNACFLTFQKELGFLGHYHPILLPLESHIKSEFLHLGLSGANVTLPFKERAFQICDKIKGIALECGAVNTLVVENDELVGYNTDALGFWLSLGGEGYQSALILGSGGSAKALACELQKQGLKVSVLNRSARGLDFFQRLGCDCFMDPPKSTFDLIINATSASLNNELPLNKEVLKGYFKEGKLAYDLAYGFLTPFLSLAKELETPFQDGKDMLIYQAALSFEKFSASQIPYPKAFEVMRSVF</sequence>
<dbReference type="EC" id="1.1.1.25" evidence="1 2"/>
<dbReference type="EMBL" id="AY738333">
    <property type="protein sequence ID" value="AAW22052.1"/>
    <property type="molecule type" value="Genomic_DNA"/>
</dbReference>
<dbReference type="RefSeq" id="WP_077232384.1">
    <property type="nucleotide sequence ID" value="NZ_CP109885.1"/>
</dbReference>
<dbReference type="SMR" id="Q56S04"/>
<dbReference type="eggNOG" id="COG0169">
    <property type="taxonomic scope" value="Bacteria"/>
</dbReference>
<dbReference type="BRENDA" id="1.1.1.25">
    <property type="organism ID" value="2604"/>
</dbReference>
<dbReference type="UniPathway" id="UPA00053">
    <property type="reaction ID" value="UER00087"/>
</dbReference>
<dbReference type="GO" id="GO:0005829">
    <property type="term" value="C:cytosol"/>
    <property type="evidence" value="ECO:0007669"/>
    <property type="project" value="TreeGrafter"/>
</dbReference>
<dbReference type="GO" id="GO:0050661">
    <property type="term" value="F:NADP binding"/>
    <property type="evidence" value="ECO:0000314"/>
    <property type="project" value="UniProtKB"/>
</dbReference>
<dbReference type="GO" id="GO:0004764">
    <property type="term" value="F:shikimate 3-dehydrogenase (NADP+) activity"/>
    <property type="evidence" value="ECO:0000314"/>
    <property type="project" value="UniProtKB"/>
</dbReference>
<dbReference type="GO" id="GO:0008652">
    <property type="term" value="P:amino acid biosynthetic process"/>
    <property type="evidence" value="ECO:0007669"/>
    <property type="project" value="UniProtKB-KW"/>
</dbReference>
<dbReference type="GO" id="GO:0009073">
    <property type="term" value="P:aromatic amino acid family biosynthetic process"/>
    <property type="evidence" value="ECO:0007669"/>
    <property type="project" value="UniProtKB-KW"/>
</dbReference>
<dbReference type="GO" id="GO:0009423">
    <property type="term" value="P:chorismate biosynthetic process"/>
    <property type="evidence" value="ECO:0000314"/>
    <property type="project" value="UniProtKB"/>
</dbReference>
<dbReference type="GO" id="GO:0019632">
    <property type="term" value="P:shikimate metabolic process"/>
    <property type="evidence" value="ECO:0000314"/>
    <property type="project" value="UniProtKB"/>
</dbReference>
<dbReference type="CDD" id="cd01065">
    <property type="entry name" value="NAD_bind_Shikimate_DH"/>
    <property type="match status" value="1"/>
</dbReference>
<dbReference type="FunFam" id="3.40.50.10860:FF:000025">
    <property type="entry name" value="Shikimate dehydrogenase (NADP(+))"/>
    <property type="match status" value="1"/>
</dbReference>
<dbReference type="Gene3D" id="3.40.50.10860">
    <property type="entry name" value="Leucine Dehydrogenase, chain A, domain 1"/>
    <property type="match status" value="1"/>
</dbReference>
<dbReference type="Gene3D" id="3.40.50.720">
    <property type="entry name" value="NAD(P)-binding Rossmann-like Domain"/>
    <property type="match status" value="1"/>
</dbReference>
<dbReference type="HAMAP" id="MF_00222">
    <property type="entry name" value="Shikimate_DH_AroE"/>
    <property type="match status" value="1"/>
</dbReference>
<dbReference type="InterPro" id="IPR046346">
    <property type="entry name" value="Aminoacid_DH-like_N_sf"/>
</dbReference>
<dbReference type="InterPro" id="IPR036291">
    <property type="entry name" value="NAD(P)-bd_dom_sf"/>
</dbReference>
<dbReference type="InterPro" id="IPR011342">
    <property type="entry name" value="Shikimate_DH"/>
</dbReference>
<dbReference type="InterPro" id="IPR013708">
    <property type="entry name" value="Shikimate_DH-bd_N"/>
</dbReference>
<dbReference type="InterPro" id="IPR022893">
    <property type="entry name" value="Shikimate_DH_fam"/>
</dbReference>
<dbReference type="NCBIfam" id="TIGR00507">
    <property type="entry name" value="aroE"/>
    <property type="match status" value="1"/>
</dbReference>
<dbReference type="NCBIfam" id="NF001316">
    <property type="entry name" value="PRK00258.2-5"/>
    <property type="match status" value="1"/>
</dbReference>
<dbReference type="PANTHER" id="PTHR21089:SF1">
    <property type="entry name" value="BIFUNCTIONAL 3-DEHYDROQUINATE DEHYDRATASE_SHIKIMATE DEHYDROGENASE, CHLOROPLASTIC"/>
    <property type="match status" value="1"/>
</dbReference>
<dbReference type="PANTHER" id="PTHR21089">
    <property type="entry name" value="SHIKIMATE DEHYDROGENASE"/>
    <property type="match status" value="1"/>
</dbReference>
<dbReference type="Pfam" id="PF08501">
    <property type="entry name" value="Shikimate_dh_N"/>
    <property type="match status" value="1"/>
</dbReference>
<dbReference type="SUPFAM" id="SSF53223">
    <property type="entry name" value="Aminoacid dehydrogenase-like, N-terminal domain"/>
    <property type="match status" value="1"/>
</dbReference>
<dbReference type="SUPFAM" id="SSF51735">
    <property type="entry name" value="NAD(P)-binding Rossmann-fold domains"/>
    <property type="match status" value="1"/>
</dbReference>
<keyword id="KW-0028">Amino-acid biosynthesis</keyword>
<keyword id="KW-0057">Aromatic amino acid biosynthesis</keyword>
<keyword id="KW-0521">NADP</keyword>
<keyword id="KW-0560">Oxidoreductase</keyword>